<sequence length="284" mass="31921">MTRNPVVAGMFYPAEYHELLEMIEYCYLNPRGPRELPSKRGKYTKPLGIVSPHAGYIYSGPVAAHGYKKISENISGEITAIILGPNHTGLGSGIATMKGTWKTPFGDMEIDNEFADRLWKECDILDMDENSHLREHSIEVQLPFLKHLEDLNIAKFKFVPISMMMQDYESCIDVGYVIAKVARELNRKIVIIASTDFSHYEPQEQASKKDAVVIKDILELNDEEIFTDVVTHTISMCGYGPVIAMVKAMKDLGARTSYLLYYSTSGDVTKDYSEVVGYASLLIK</sequence>
<accession>P61652</accession>
<protein>
    <recommendedName>
        <fullName evidence="1">MEMO1 family protein MMP1387</fullName>
    </recommendedName>
</protein>
<proteinExistence type="inferred from homology"/>
<dbReference type="EMBL" id="BX950229">
    <property type="protein sequence ID" value="CAF30943.1"/>
    <property type="molecule type" value="Genomic_DNA"/>
</dbReference>
<dbReference type="RefSeq" id="WP_011171331.1">
    <property type="nucleotide sequence ID" value="NC_005791.1"/>
</dbReference>
<dbReference type="SMR" id="P61652"/>
<dbReference type="STRING" id="267377.MMP1387"/>
<dbReference type="EnsemblBacteria" id="CAF30943">
    <property type="protein sequence ID" value="CAF30943"/>
    <property type="gene ID" value="MMP1387"/>
</dbReference>
<dbReference type="GeneID" id="2761673"/>
<dbReference type="KEGG" id="mmp:MMP1387"/>
<dbReference type="PATRIC" id="fig|267377.15.peg.1423"/>
<dbReference type="eggNOG" id="arCOG01728">
    <property type="taxonomic scope" value="Archaea"/>
</dbReference>
<dbReference type="HOGENOM" id="CLU_038085_2_0_2"/>
<dbReference type="OrthoDB" id="372162at2157"/>
<dbReference type="Proteomes" id="UP000000590">
    <property type="component" value="Chromosome"/>
</dbReference>
<dbReference type="CDD" id="cd07361">
    <property type="entry name" value="MEMO_like"/>
    <property type="match status" value="1"/>
</dbReference>
<dbReference type="Gene3D" id="3.40.830.10">
    <property type="entry name" value="LigB-like"/>
    <property type="match status" value="1"/>
</dbReference>
<dbReference type="HAMAP" id="MF_00055">
    <property type="entry name" value="MEMO1"/>
    <property type="match status" value="1"/>
</dbReference>
<dbReference type="InterPro" id="IPR002737">
    <property type="entry name" value="MEMO1_fam"/>
</dbReference>
<dbReference type="NCBIfam" id="TIGR04336">
    <property type="entry name" value="AmmeMemoSam_B"/>
    <property type="match status" value="1"/>
</dbReference>
<dbReference type="NCBIfam" id="NF001987">
    <property type="entry name" value="PRK00782.1"/>
    <property type="match status" value="1"/>
</dbReference>
<dbReference type="PANTHER" id="PTHR11060">
    <property type="entry name" value="PROTEIN MEMO1"/>
    <property type="match status" value="1"/>
</dbReference>
<dbReference type="PANTHER" id="PTHR11060:SF0">
    <property type="entry name" value="PROTEIN MEMO1"/>
    <property type="match status" value="1"/>
</dbReference>
<dbReference type="Pfam" id="PF01875">
    <property type="entry name" value="Memo"/>
    <property type="match status" value="1"/>
</dbReference>
<name>Y1387_METMP</name>
<reference key="1">
    <citation type="journal article" date="2004" name="J. Bacteriol.">
        <title>Complete genome sequence of the genetically tractable hydrogenotrophic methanogen Methanococcus maripaludis.</title>
        <authorList>
            <person name="Hendrickson E.L."/>
            <person name="Kaul R."/>
            <person name="Zhou Y."/>
            <person name="Bovee D."/>
            <person name="Chapman P."/>
            <person name="Chung J."/>
            <person name="Conway de Macario E."/>
            <person name="Dodsworth J.A."/>
            <person name="Gillett W."/>
            <person name="Graham D.E."/>
            <person name="Hackett M."/>
            <person name="Haydock A.K."/>
            <person name="Kang A."/>
            <person name="Land M.L."/>
            <person name="Levy R."/>
            <person name="Lie T.J."/>
            <person name="Major T.A."/>
            <person name="Moore B.C."/>
            <person name="Porat I."/>
            <person name="Palmeiri A."/>
            <person name="Rouse G."/>
            <person name="Saenphimmachak C."/>
            <person name="Soell D."/>
            <person name="Van Dien S."/>
            <person name="Wang T."/>
            <person name="Whitman W.B."/>
            <person name="Xia Q."/>
            <person name="Zhang Y."/>
            <person name="Larimer F.W."/>
            <person name="Olson M.V."/>
            <person name="Leigh J.A."/>
        </authorList>
    </citation>
    <scope>NUCLEOTIDE SEQUENCE [LARGE SCALE GENOMIC DNA]</scope>
    <source>
        <strain>DSM 14266 / JCM 13030 / NBRC 101832 / S2 / LL</strain>
    </source>
</reference>
<organism>
    <name type="scientific">Methanococcus maripaludis (strain DSM 14266 / JCM 13030 / NBRC 101832 / S2 / LL)</name>
    <dbReference type="NCBI Taxonomy" id="267377"/>
    <lineage>
        <taxon>Archaea</taxon>
        <taxon>Methanobacteriati</taxon>
        <taxon>Methanobacteriota</taxon>
        <taxon>Methanomada group</taxon>
        <taxon>Methanococci</taxon>
        <taxon>Methanococcales</taxon>
        <taxon>Methanococcaceae</taxon>
        <taxon>Methanococcus</taxon>
    </lineage>
</organism>
<gene>
    <name type="ordered locus">MMP1387</name>
</gene>
<feature type="chain" id="PRO_0000134382" description="MEMO1 family protein MMP1387">
    <location>
        <begin position="1"/>
        <end position="284"/>
    </location>
</feature>
<keyword id="KW-1185">Reference proteome</keyword>
<comment type="similarity">
    <text evidence="1">Belongs to the MEMO1 family.</text>
</comment>
<evidence type="ECO:0000255" key="1">
    <source>
        <dbReference type="HAMAP-Rule" id="MF_00055"/>
    </source>
</evidence>